<dbReference type="EMBL" id="BX569695">
    <property type="protein sequence ID" value="CAE08861.1"/>
    <property type="molecule type" value="Genomic_DNA"/>
</dbReference>
<dbReference type="RefSeq" id="WP_011129199.1">
    <property type="nucleotide sequence ID" value="NC_005070.1"/>
</dbReference>
<dbReference type="SMR" id="Q7U3T3"/>
<dbReference type="STRING" id="84588.SYNW2346"/>
<dbReference type="KEGG" id="syw:SYNW2346"/>
<dbReference type="eggNOG" id="COG0542">
    <property type="taxonomic scope" value="Bacteria"/>
</dbReference>
<dbReference type="HOGENOM" id="CLU_005070_4_2_3"/>
<dbReference type="Proteomes" id="UP000001422">
    <property type="component" value="Chromosome"/>
</dbReference>
<dbReference type="GO" id="GO:0005737">
    <property type="term" value="C:cytoplasm"/>
    <property type="evidence" value="ECO:0007669"/>
    <property type="project" value="UniProtKB-SubCell"/>
</dbReference>
<dbReference type="GO" id="GO:0005524">
    <property type="term" value="F:ATP binding"/>
    <property type="evidence" value="ECO:0007669"/>
    <property type="project" value="UniProtKB-KW"/>
</dbReference>
<dbReference type="GO" id="GO:0016887">
    <property type="term" value="F:ATP hydrolysis activity"/>
    <property type="evidence" value="ECO:0007669"/>
    <property type="project" value="InterPro"/>
</dbReference>
<dbReference type="GO" id="GO:0034605">
    <property type="term" value="P:cellular response to heat"/>
    <property type="evidence" value="ECO:0007669"/>
    <property type="project" value="TreeGrafter"/>
</dbReference>
<dbReference type="CDD" id="cd00009">
    <property type="entry name" value="AAA"/>
    <property type="match status" value="1"/>
</dbReference>
<dbReference type="CDD" id="cd19499">
    <property type="entry name" value="RecA-like_ClpB_Hsp104-like"/>
    <property type="match status" value="1"/>
</dbReference>
<dbReference type="FunFam" id="3.40.50.300:FF:000120">
    <property type="entry name" value="ATP-dependent chaperone ClpB"/>
    <property type="match status" value="1"/>
</dbReference>
<dbReference type="FunFam" id="3.40.50.300:FF:000025">
    <property type="entry name" value="ATP-dependent Clp protease subunit"/>
    <property type="match status" value="1"/>
</dbReference>
<dbReference type="FunFam" id="3.40.50.300:FF:000010">
    <property type="entry name" value="Chaperone clpB 1, putative"/>
    <property type="match status" value="1"/>
</dbReference>
<dbReference type="Gene3D" id="1.10.8.60">
    <property type="match status" value="1"/>
</dbReference>
<dbReference type="Gene3D" id="1.10.1780.10">
    <property type="entry name" value="Clp, N-terminal domain"/>
    <property type="match status" value="1"/>
</dbReference>
<dbReference type="Gene3D" id="3.40.50.300">
    <property type="entry name" value="P-loop containing nucleotide triphosphate hydrolases"/>
    <property type="match status" value="3"/>
</dbReference>
<dbReference type="InterPro" id="IPR003593">
    <property type="entry name" value="AAA+_ATPase"/>
</dbReference>
<dbReference type="InterPro" id="IPR003959">
    <property type="entry name" value="ATPase_AAA_core"/>
</dbReference>
<dbReference type="InterPro" id="IPR019489">
    <property type="entry name" value="Clp_ATPase_C"/>
</dbReference>
<dbReference type="InterPro" id="IPR036628">
    <property type="entry name" value="Clp_N_dom_sf"/>
</dbReference>
<dbReference type="InterPro" id="IPR004176">
    <property type="entry name" value="Clp_R_dom"/>
</dbReference>
<dbReference type="InterPro" id="IPR001270">
    <property type="entry name" value="ClpA/B"/>
</dbReference>
<dbReference type="InterPro" id="IPR018368">
    <property type="entry name" value="ClpA/B_CS1"/>
</dbReference>
<dbReference type="InterPro" id="IPR028299">
    <property type="entry name" value="ClpA/B_CS2"/>
</dbReference>
<dbReference type="InterPro" id="IPR041546">
    <property type="entry name" value="ClpA/ClpB_AAA_lid"/>
</dbReference>
<dbReference type="InterPro" id="IPR050130">
    <property type="entry name" value="ClpA_ClpB"/>
</dbReference>
<dbReference type="InterPro" id="IPR027417">
    <property type="entry name" value="P-loop_NTPase"/>
</dbReference>
<dbReference type="PANTHER" id="PTHR11638">
    <property type="entry name" value="ATP-DEPENDENT CLP PROTEASE"/>
    <property type="match status" value="1"/>
</dbReference>
<dbReference type="PANTHER" id="PTHR11638:SF18">
    <property type="entry name" value="HEAT SHOCK PROTEIN 104"/>
    <property type="match status" value="1"/>
</dbReference>
<dbReference type="Pfam" id="PF00004">
    <property type="entry name" value="AAA"/>
    <property type="match status" value="1"/>
</dbReference>
<dbReference type="Pfam" id="PF07724">
    <property type="entry name" value="AAA_2"/>
    <property type="match status" value="1"/>
</dbReference>
<dbReference type="Pfam" id="PF17871">
    <property type="entry name" value="AAA_lid_9"/>
    <property type="match status" value="1"/>
</dbReference>
<dbReference type="Pfam" id="PF02861">
    <property type="entry name" value="Clp_N"/>
    <property type="match status" value="2"/>
</dbReference>
<dbReference type="Pfam" id="PF10431">
    <property type="entry name" value="ClpB_D2-small"/>
    <property type="match status" value="1"/>
</dbReference>
<dbReference type="PRINTS" id="PR00300">
    <property type="entry name" value="CLPPROTEASEA"/>
</dbReference>
<dbReference type="SMART" id="SM00382">
    <property type="entry name" value="AAA"/>
    <property type="match status" value="2"/>
</dbReference>
<dbReference type="SMART" id="SM01086">
    <property type="entry name" value="ClpB_D2-small"/>
    <property type="match status" value="1"/>
</dbReference>
<dbReference type="SUPFAM" id="SSF81923">
    <property type="entry name" value="Double Clp-N motif"/>
    <property type="match status" value="1"/>
</dbReference>
<dbReference type="SUPFAM" id="SSF52540">
    <property type="entry name" value="P-loop containing nucleoside triphosphate hydrolases"/>
    <property type="match status" value="2"/>
</dbReference>
<dbReference type="PROSITE" id="PS51903">
    <property type="entry name" value="CLP_R"/>
    <property type="match status" value="1"/>
</dbReference>
<dbReference type="PROSITE" id="PS00870">
    <property type="entry name" value="CLPAB_1"/>
    <property type="match status" value="1"/>
</dbReference>
<dbReference type="PROSITE" id="PS00871">
    <property type="entry name" value="CLPAB_2"/>
    <property type="match status" value="1"/>
</dbReference>
<protein>
    <recommendedName>
        <fullName>Chaperone protein ClpB 2</fullName>
    </recommendedName>
</protein>
<gene>
    <name type="primary">clpB2</name>
    <name type="ordered locus">SYNW2346</name>
</gene>
<sequence>MTGTPASRGSLTHEPDRFSDPAWELLLAGQDMARRWRHDQLDVEHLIQVLFSDSSFRRWVEPLPLRSDDLLDRLEDVLADQPPARGDQLFIGEDLEQLLETADQVRGRWGDRSIDVPQLIVAVGADPRIGAELFAAQGLAVDRLESLLRQPSVSPAPAPPPVPTAASAPAPTPRSAPAPRVMAPEPEPMVELEREPSALEAYGRDLTEEAEAGSLDPVIGRDSEIRNLIKVLSRRSKNNPVLIGEPGVGKTAIAELLAQRIVAGEVPDSLQGLRLIALDLGALIAGAKFRGQFEERLRSVLEEVSRSDSGVVLFIDELHTVVGSDRSSTDAGSLLKPALARGDLRCIGATTPEEYRRTVEKDPALNRRFQQVLIREPDLELSLEILRGLRERYELHHGVTITDEAIQTANRLADRYISDRCLPDKAIDLIDEAAAQLKIEVTSKPQVVEEAEADLRRVELALLAAEEAPEEERIQLQRQRLEVSSRLDDLRRRWQEERTQLEELGQLLQQDEDLRHAIAEAEREGALEEAARLQYDQLHTVQQRREALEASQAEAQSAGTALLREQVEAGDIADLVARWTGIPVQRLLAGERRKLLALESHLSERVIGQVEAVAAVAAAIRRARAGMKDPRRPVGSFLFLGPTGVGKTELAKALATSLFDEEEALVRLDMSEFMERNASARLIGAPPGYVGYEEGGQLTEAVRRRPYAVLLLDEVEKAHPDVFNLLLQVLDDGRLTDSQGLTVDFRHTVVVMTSNLASPVILEHARSGSSDDAQLQQQVDAALSSQFRPEFLNRIDEVIRFRPLKVKDLVRIVRLQLADLSTLMAEQGLSLEVDDAVADSLARQGHEPEYGARPLRRVLRRQLENPLATQLLEERFRSAHGIRVRCGTDDGASLEFEPLE</sequence>
<evidence type="ECO:0000250" key="1"/>
<evidence type="ECO:0000255" key="2">
    <source>
        <dbReference type="PROSITE-ProRule" id="PRU01251"/>
    </source>
</evidence>
<evidence type="ECO:0000256" key="3">
    <source>
        <dbReference type="SAM" id="MobiDB-lite"/>
    </source>
</evidence>
<evidence type="ECO:0000305" key="4"/>
<feature type="chain" id="PRO_0000191191" description="Chaperone protein ClpB 2">
    <location>
        <begin position="1"/>
        <end position="900"/>
    </location>
</feature>
<feature type="domain" description="Clp R" evidence="2">
    <location>
        <begin position="15"/>
        <end position="154"/>
    </location>
</feature>
<feature type="region of interest" description="Repeat 1" evidence="2">
    <location>
        <begin position="18"/>
        <end position="81"/>
    </location>
</feature>
<feature type="region of interest" description="Repeat 2" evidence="2">
    <location>
        <begin position="91"/>
        <end position="154"/>
    </location>
</feature>
<feature type="region of interest" description="Disordered" evidence="3">
    <location>
        <begin position="151"/>
        <end position="183"/>
    </location>
</feature>
<feature type="region of interest" description="NBD1" evidence="1">
    <location>
        <begin position="191"/>
        <end position="376"/>
    </location>
</feature>
<feature type="region of interest" description="Linker" evidence="1">
    <location>
        <begin position="377"/>
        <end position="581"/>
    </location>
</feature>
<feature type="region of interest" description="NBD2" evidence="1">
    <location>
        <begin position="591"/>
        <end position="803"/>
    </location>
</feature>
<feature type="region of interest" description="C-terminal" evidence="1">
    <location>
        <begin position="804"/>
        <end position="900"/>
    </location>
</feature>
<feature type="coiled-coil region" evidence="1">
    <location>
        <begin position="427"/>
        <end position="557"/>
    </location>
</feature>
<feature type="compositionally biased region" description="Pro residues" evidence="3">
    <location>
        <begin position="154"/>
        <end position="163"/>
    </location>
</feature>
<feature type="binding site" evidence="1">
    <location>
        <begin position="244"/>
        <end position="251"/>
    </location>
    <ligand>
        <name>ATP</name>
        <dbReference type="ChEBI" id="CHEBI:30616"/>
        <label>1</label>
    </ligand>
</feature>
<feature type="binding site" evidence="1">
    <location>
        <begin position="641"/>
        <end position="648"/>
    </location>
    <ligand>
        <name>ATP</name>
        <dbReference type="ChEBI" id="CHEBI:30616"/>
        <label>2</label>
    </ligand>
</feature>
<comment type="function">
    <text evidence="1">Part of a stress-induced multi-chaperone system, it is involved in the recovery of the cell from heat-induced damage, in cooperation with DnaK, DnaJ and GrpE. Acts before DnaK, in the processing of protein aggregates. Protein binding stimulates the ATPase activity; ATP hydrolysis unfolds the denatured protein aggregates, which probably helps expose new hydrophobic binding sites on the surface of ClpB-bound aggregates, contributing to the solubilization and refolding of denatured protein aggregates by DnaK (By similarity).</text>
</comment>
<comment type="subunit">
    <text evidence="1">Homohexamer. The oligomerization is ATP-dependent (By similarity).</text>
</comment>
<comment type="subcellular location">
    <subcellularLocation>
        <location evidence="4">Cytoplasm</location>
    </subcellularLocation>
</comment>
<comment type="domain">
    <text evidence="1">The Clp repeat (R) domain probably functions as a substrate-discriminating domain, recruiting aggregated proteins to the ClpB hexamer and/or stabilizing bound proteins. The NBD2 domain is responsible for oligomerization, whereas the NBD1 domain stabilizes the hexamer probably in an ATP-dependent manner. The movement of the coiled-coil domain is essential for ClpB ability to rescue proteins from an aggregated state, probably by pulling apart large aggregated proteins, which are bound between the coiled-coils motifs of adjacent ClpB subunits in the functional hexamer (By similarity).</text>
</comment>
<comment type="similarity">
    <text evidence="4">Belongs to the ClpA/ClpB family.</text>
</comment>
<organism>
    <name type="scientific">Parasynechococcus marenigrum (strain WH8102)</name>
    <dbReference type="NCBI Taxonomy" id="84588"/>
    <lineage>
        <taxon>Bacteria</taxon>
        <taxon>Bacillati</taxon>
        <taxon>Cyanobacteriota</taxon>
        <taxon>Cyanophyceae</taxon>
        <taxon>Synechococcales</taxon>
        <taxon>Prochlorococcaceae</taxon>
        <taxon>Parasynechococcus</taxon>
        <taxon>Parasynechococcus marenigrum</taxon>
    </lineage>
</organism>
<name>CLPB2_PARMW</name>
<accession>Q7U3T3</accession>
<reference key="1">
    <citation type="journal article" date="2003" name="Nature">
        <title>The genome of a motile marine Synechococcus.</title>
        <authorList>
            <person name="Palenik B."/>
            <person name="Brahamsha B."/>
            <person name="Larimer F.W."/>
            <person name="Land M.L."/>
            <person name="Hauser L."/>
            <person name="Chain P."/>
            <person name="Lamerdin J.E."/>
            <person name="Regala W."/>
            <person name="Allen E.E."/>
            <person name="McCarren J."/>
            <person name="Paulsen I.T."/>
            <person name="Dufresne A."/>
            <person name="Partensky F."/>
            <person name="Webb E.A."/>
            <person name="Waterbury J."/>
        </authorList>
    </citation>
    <scope>NUCLEOTIDE SEQUENCE [LARGE SCALE GENOMIC DNA]</scope>
    <source>
        <strain>WH8102</strain>
    </source>
</reference>
<keyword id="KW-0067">ATP-binding</keyword>
<keyword id="KW-0143">Chaperone</keyword>
<keyword id="KW-0175">Coiled coil</keyword>
<keyword id="KW-0963">Cytoplasm</keyword>
<keyword id="KW-0547">Nucleotide-binding</keyword>
<keyword id="KW-0677">Repeat</keyword>
<keyword id="KW-0346">Stress response</keyword>
<proteinExistence type="inferred from homology"/>